<comment type="function">
    <text evidence="2">Component of the cuticle of the larva.</text>
</comment>
<comment type="developmental stage">
    <text evidence="2">Expression begins at the end of second larval instar, present throughout third larval instar and is gone by the pupal stages.</text>
</comment>
<comment type="sequence caution" evidence="5">
    <conflict type="frameshift">
        <sequence resource="EMBL-CDS" id="AAD00301"/>
    </conflict>
</comment>
<gene>
    <name evidence="6" type="primary">Lcp65Ab1</name>
    <name evidence="3" type="synonym">Lcp-b1</name>
    <name evidence="3" type="synonym">Lcp5</name>
    <name evidence="6" type="ORF">CG18776</name>
</gene>
<feature type="signal peptide" evidence="2">
    <location>
        <begin position="1"/>
        <end position="18"/>
    </location>
</feature>
<feature type="chain" id="PRO_0000006394" description="Larval cuticle protein 65Ab1">
    <location>
        <begin position="19"/>
        <end position="104"/>
    </location>
</feature>
<feature type="domain" description="Chitin-binding type R&amp;R" evidence="1">
    <location>
        <begin position="32"/>
        <end position="102"/>
    </location>
</feature>
<sequence length="104" mass="11267">MKFLIVFVALFAMAVARPNLAEIVRQVSDVEPEKWSSDVETSDGTSIKQEGVLKNAGTDNEAAVVHGSFTWVDEKTGEKFTITYVADENGYQPQGAHLPVAPVA</sequence>
<accession>C0HL62</accession>
<accession>O96905</accession>
<accession>P92192</accession>
<reference key="1">
    <citation type="journal article" date="1997" name="Genetics">
        <title>A cluster of cuticle genes of Drosophila at 65A: sequence, structure and evolution.</title>
        <authorList>
            <person name="Charles J.-P."/>
            <person name="Chihara C."/>
            <person name="Nejad S."/>
            <person name="Riddiford L.M."/>
        </authorList>
    </citation>
    <scope>NUCLEOTIDE SEQUENCE [GENOMIC DNA / MRNA]</scope>
    <source>
        <strain>Iso-1</strain>
        <strain>Oregon-R</strain>
    </source>
</reference>
<reference key="2">
    <citation type="journal article" date="2000" name="Science">
        <title>The genome sequence of Drosophila melanogaster.</title>
        <authorList>
            <person name="Adams M.D."/>
            <person name="Celniker S.E."/>
            <person name="Holt R.A."/>
            <person name="Evans C.A."/>
            <person name="Gocayne J.D."/>
            <person name="Amanatides P.G."/>
            <person name="Scherer S.E."/>
            <person name="Li P.W."/>
            <person name="Hoskins R.A."/>
            <person name="Galle R.F."/>
            <person name="George R.A."/>
            <person name="Lewis S.E."/>
            <person name="Richards S."/>
            <person name="Ashburner M."/>
            <person name="Henderson S.N."/>
            <person name="Sutton G.G."/>
            <person name="Wortman J.R."/>
            <person name="Yandell M.D."/>
            <person name="Zhang Q."/>
            <person name="Chen L.X."/>
            <person name="Brandon R.C."/>
            <person name="Rogers Y.-H.C."/>
            <person name="Blazej R.G."/>
            <person name="Champe M."/>
            <person name="Pfeiffer B.D."/>
            <person name="Wan K.H."/>
            <person name="Doyle C."/>
            <person name="Baxter E.G."/>
            <person name="Helt G."/>
            <person name="Nelson C.R."/>
            <person name="Miklos G.L.G."/>
            <person name="Abril J.F."/>
            <person name="Agbayani A."/>
            <person name="An H.-J."/>
            <person name="Andrews-Pfannkoch C."/>
            <person name="Baldwin D."/>
            <person name="Ballew R.M."/>
            <person name="Basu A."/>
            <person name="Baxendale J."/>
            <person name="Bayraktaroglu L."/>
            <person name="Beasley E.M."/>
            <person name="Beeson K.Y."/>
            <person name="Benos P.V."/>
            <person name="Berman B.P."/>
            <person name="Bhandari D."/>
            <person name="Bolshakov S."/>
            <person name="Borkova D."/>
            <person name="Botchan M.R."/>
            <person name="Bouck J."/>
            <person name="Brokstein P."/>
            <person name="Brottier P."/>
            <person name="Burtis K.C."/>
            <person name="Busam D.A."/>
            <person name="Butler H."/>
            <person name="Cadieu E."/>
            <person name="Center A."/>
            <person name="Chandra I."/>
            <person name="Cherry J.M."/>
            <person name="Cawley S."/>
            <person name="Dahlke C."/>
            <person name="Davenport L.B."/>
            <person name="Davies P."/>
            <person name="de Pablos B."/>
            <person name="Delcher A."/>
            <person name="Deng Z."/>
            <person name="Mays A.D."/>
            <person name="Dew I."/>
            <person name="Dietz S.M."/>
            <person name="Dodson K."/>
            <person name="Doup L.E."/>
            <person name="Downes M."/>
            <person name="Dugan-Rocha S."/>
            <person name="Dunkov B.C."/>
            <person name="Dunn P."/>
            <person name="Durbin K.J."/>
            <person name="Evangelista C.C."/>
            <person name="Ferraz C."/>
            <person name="Ferriera S."/>
            <person name="Fleischmann W."/>
            <person name="Fosler C."/>
            <person name="Gabrielian A.E."/>
            <person name="Garg N.S."/>
            <person name="Gelbart W.M."/>
            <person name="Glasser K."/>
            <person name="Glodek A."/>
            <person name="Gong F."/>
            <person name="Gorrell J.H."/>
            <person name="Gu Z."/>
            <person name="Guan P."/>
            <person name="Harris M."/>
            <person name="Harris N.L."/>
            <person name="Harvey D.A."/>
            <person name="Heiman T.J."/>
            <person name="Hernandez J.R."/>
            <person name="Houck J."/>
            <person name="Hostin D."/>
            <person name="Houston K.A."/>
            <person name="Howland T.J."/>
            <person name="Wei M.-H."/>
            <person name="Ibegwam C."/>
            <person name="Jalali M."/>
            <person name="Kalush F."/>
            <person name="Karpen G.H."/>
            <person name="Ke Z."/>
            <person name="Kennison J.A."/>
            <person name="Ketchum K.A."/>
            <person name="Kimmel B.E."/>
            <person name="Kodira C.D."/>
            <person name="Kraft C.L."/>
            <person name="Kravitz S."/>
            <person name="Kulp D."/>
            <person name="Lai Z."/>
            <person name="Lasko P."/>
            <person name="Lei Y."/>
            <person name="Levitsky A.A."/>
            <person name="Li J.H."/>
            <person name="Li Z."/>
            <person name="Liang Y."/>
            <person name="Lin X."/>
            <person name="Liu X."/>
            <person name="Mattei B."/>
            <person name="McIntosh T.C."/>
            <person name="McLeod M.P."/>
            <person name="McPherson D."/>
            <person name="Merkulov G."/>
            <person name="Milshina N.V."/>
            <person name="Mobarry C."/>
            <person name="Morris J."/>
            <person name="Moshrefi A."/>
            <person name="Mount S.M."/>
            <person name="Moy M."/>
            <person name="Murphy B."/>
            <person name="Murphy L."/>
            <person name="Muzny D.M."/>
            <person name="Nelson D.L."/>
            <person name="Nelson D.R."/>
            <person name="Nelson K.A."/>
            <person name="Nixon K."/>
            <person name="Nusskern D.R."/>
            <person name="Pacleb J.M."/>
            <person name="Palazzolo M."/>
            <person name="Pittman G.S."/>
            <person name="Pan S."/>
            <person name="Pollard J."/>
            <person name="Puri V."/>
            <person name="Reese M.G."/>
            <person name="Reinert K."/>
            <person name="Remington K."/>
            <person name="Saunders R.D.C."/>
            <person name="Scheeler F."/>
            <person name="Shen H."/>
            <person name="Shue B.C."/>
            <person name="Siden-Kiamos I."/>
            <person name="Simpson M."/>
            <person name="Skupski M.P."/>
            <person name="Smith T.J."/>
            <person name="Spier E."/>
            <person name="Spradling A.C."/>
            <person name="Stapleton M."/>
            <person name="Strong R."/>
            <person name="Sun E."/>
            <person name="Svirskas R."/>
            <person name="Tector C."/>
            <person name="Turner R."/>
            <person name="Venter E."/>
            <person name="Wang A.H."/>
            <person name="Wang X."/>
            <person name="Wang Z.-Y."/>
            <person name="Wassarman D.A."/>
            <person name="Weinstock G.M."/>
            <person name="Weissenbach J."/>
            <person name="Williams S.M."/>
            <person name="Woodage T."/>
            <person name="Worley K.C."/>
            <person name="Wu D."/>
            <person name="Yang S."/>
            <person name="Yao Q.A."/>
            <person name="Ye J."/>
            <person name="Yeh R.-F."/>
            <person name="Zaveri J.S."/>
            <person name="Zhan M."/>
            <person name="Zhang G."/>
            <person name="Zhao Q."/>
            <person name="Zheng L."/>
            <person name="Zheng X.H."/>
            <person name="Zhong F.N."/>
            <person name="Zhong W."/>
            <person name="Zhou X."/>
            <person name="Zhu S.C."/>
            <person name="Zhu X."/>
            <person name="Smith H.O."/>
            <person name="Gibbs R.A."/>
            <person name="Myers E.W."/>
            <person name="Rubin G.M."/>
            <person name="Venter J.C."/>
        </authorList>
    </citation>
    <scope>NUCLEOTIDE SEQUENCE [LARGE SCALE GENOMIC DNA]</scope>
    <source>
        <strain>Berkeley</strain>
    </source>
</reference>
<reference key="3">
    <citation type="journal article" date="2002" name="Genome Biol.">
        <title>Annotation of the Drosophila melanogaster euchromatic genome: a systematic review.</title>
        <authorList>
            <person name="Misra S."/>
            <person name="Crosby M.A."/>
            <person name="Mungall C.J."/>
            <person name="Matthews B.B."/>
            <person name="Campbell K.S."/>
            <person name="Hradecky P."/>
            <person name="Huang Y."/>
            <person name="Kaminker J.S."/>
            <person name="Millburn G.H."/>
            <person name="Prochnik S.E."/>
            <person name="Smith C.D."/>
            <person name="Tupy J.L."/>
            <person name="Whitfield E.J."/>
            <person name="Bayraktaroglu L."/>
            <person name="Berman B.P."/>
            <person name="Bettencourt B.R."/>
            <person name="Celniker S.E."/>
            <person name="de Grey A.D.N.J."/>
            <person name="Drysdale R.A."/>
            <person name="Harris N.L."/>
            <person name="Richter J."/>
            <person name="Russo S."/>
            <person name="Schroeder A.J."/>
            <person name="Shu S.Q."/>
            <person name="Stapleton M."/>
            <person name="Yamada C."/>
            <person name="Ashburner M."/>
            <person name="Gelbart W.M."/>
            <person name="Rubin G.M."/>
            <person name="Lewis S.E."/>
        </authorList>
    </citation>
    <scope>GENOME REANNOTATION</scope>
    <source>
        <strain>Berkeley</strain>
    </source>
</reference>
<reference key="4">
    <citation type="journal article" date="1998" name="Insect Biochem. Mol. Biol.">
        <title>Identification of proteins and developmental expression of RNAs encoded by the 65A cuticle protein gene cluster in Drosophila melanogaster.</title>
        <authorList>
            <person name="Charles J.-P."/>
            <person name="Chihara C."/>
            <person name="Nejad S."/>
            <person name="Riddiford L.M."/>
        </authorList>
    </citation>
    <scope>PROTEIN SEQUENCE OF 19-32</scope>
    <scope>FUNCTION</scope>
    <scope>DEVELOPMENTAL STAGE</scope>
    <source>
        <strain>Oregon-R</strain>
        <tissue>Larva</tissue>
    </source>
</reference>
<name>LCP51_DROME</name>
<evidence type="ECO:0000255" key="1">
    <source>
        <dbReference type="PROSITE-ProRule" id="PRU00497"/>
    </source>
</evidence>
<evidence type="ECO:0000269" key="2">
    <source>
    </source>
</evidence>
<evidence type="ECO:0000303" key="3">
    <source>
    </source>
</evidence>
<evidence type="ECO:0000303" key="4">
    <source>
    </source>
</evidence>
<evidence type="ECO:0000305" key="5"/>
<evidence type="ECO:0000312" key="6">
    <source>
        <dbReference type="FlyBase" id="FBgn0020644"/>
    </source>
</evidence>
<protein>
    <recommendedName>
        <fullName evidence="4">Larval cuticle protein 65Ab1</fullName>
    </recommendedName>
    <alternativeName>
        <fullName evidence="3">Larval cuticle protein 5</fullName>
    </alternativeName>
</protein>
<organism>
    <name type="scientific">Drosophila melanogaster</name>
    <name type="common">Fruit fly</name>
    <dbReference type="NCBI Taxonomy" id="7227"/>
    <lineage>
        <taxon>Eukaryota</taxon>
        <taxon>Metazoa</taxon>
        <taxon>Ecdysozoa</taxon>
        <taxon>Arthropoda</taxon>
        <taxon>Hexapoda</taxon>
        <taxon>Insecta</taxon>
        <taxon>Pterygota</taxon>
        <taxon>Neoptera</taxon>
        <taxon>Endopterygota</taxon>
        <taxon>Diptera</taxon>
        <taxon>Brachycera</taxon>
        <taxon>Muscomorpha</taxon>
        <taxon>Ephydroidea</taxon>
        <taxon>Drosophilidae</taxon>
        <taxon>Drosophila</taxon>
        <taxon>Sophophora</taxon>
    </lineage>
</organism>
<dbReference type="EMBL" id="U81550">
    <property type="protein sequence ID" value="AAD00301.1"/>
    <property type="status" value="ALT_FRAME"/>
    <property type="molecule type" value="mRNA"/>
</dbReference>
<dbReference type="EMBL" id="U84747">
    <property type="protein sequence ID" value="AAB88066.1"/>
    <property type="molecule type" value="Genomic_DNA"/>
</dbReference>
<dbReference type="EMBL" id="AE014296">
    <property type="protein sequence ID" value="AAG22331.1"/>
    <property type="molecule type" value="Genomic_DNA"/>
</dbReference>
<dbReference type="RefSeq" id="NP_524814.2">
    <property type="nucleotide sequence ID" value="NM_080075.3"/>
</dbReference>
<dbReference type="FunCoup" id="C0HL62">
    <property type="interactions" value="11"/>
</dbReference>
<dbReference type="STRING" id="7227.FBpp0076701"/>
<dbReference type="PaxDb" id="7227-FBpp0076701"/>
<dbReference type="DNASU" id="48382"/>
<dbReference type="EnsemblMetazoa" id="FBtr0076992">
    <property type="protein sequence ID" value="FBpp0076701"/>
    <property type="gene ID" value="FBgn0020643"/>
</dbReference>
<dbReference type="EnsemblMetazoa" id="FBtr0076994">
    <property type="protein sequence ID" value="FBpp0076702"/>
    <property type="gene ID" value="FBgn0020644"/>
</dbReference>
<dbReference type="GeneID" id="48381"/>
<dbReference type="GeneID" id="48382"/>
<dbReference type="KEGG" id="dme:Dmel_CG18773"/>
<dbReference type="KEGG" id="dme:Dmel_CG32400"/>
<dbReference type="AGR" id="FB:FBgn0020644"/>
<dbReference type="CTD" id="48381"/>
<dbReference type="CTD" id="48382"/>
<dbReference type="FlyBase" id="FBgn0020644">
    <property type="gene designation" value="Lcp65Ab1"/>
</dbReference>
<dbReference type="VEuPathDB" id="VectorBase:FBgn0020643"/>
<dbReference type="VEuPathDB" id="VectorBase:FBgn0020644"/>
<dbReference type="InParanoid" id="C0HL62"/>
<dbReference type="OMA" id="PPQNEVG"/>
<dbReference type="OrthoDB" id="7255276at2759"/>
<dbReference type="PRO" id="PR:C0HL62"/>
<dbReference type="Proteomes" id="UP000000803">
    <property type="component" value="Chromosome 3L"/>
</dbReference>
<dbReference type="Bgee" id="FBgn0020643">
    <property type="expression patterns" value="Expressed in larva and 3 other cell types or tissues"/>
</dbReference>
<dbReference type="GO" id="GO:0062129">
    <property type="term" value="C:chitin-based extracellular matrix"/>
    <property type="evidence" value="ECO:0000314"/>
    <property type="project" value="FlyBase"/>
</dbReference>
<dbReference type="GO" id="GO:0005576">
    <property type="term" value="C:extracellular region"/>
    <property type="evidence" value="ECO:0000303"/>
    <property type="project" value="UniProtKB"/>
</dbReference>
<dbReference type="GO" id="GO:0008010">
    <property type="term" value="F:structural constituent of chitin-based larval cuticle"/>
    <property type="evidence" value="ECO:0000314"/>
    <property type="project" value="FlyBase"/>
</dbReference>
<dbReference type="GO" id="GO:0040003">
    <property type="term" value="P:chitin-based cuticle development"/>
    <property type="evidence" value="ECO:0000255"/>
    <property type="project" value="FlyBase"/>
</dbReference>
<dbReference type="GO" id="GO:0008363">
    <property type="term" value="P:larval chitin-based cuticle development"/>
    <property type="evidence" value="ECO:0000303"/>
    <property type="project" value="UniProtKB"/>
</dbReference>
<dbReference type="InterPro" id="IPR050468">
    <property type="entry name" value="Cuticle_Struct_Prot"/>
</dbReference>
<dbReference type="InterPro" id="IPR000618">
    <property type="entry name" value="Insect_cuticle"/>
</dbReference>
<dbReference type="PANTHER" id="PTHR10380:SF218">
    <property type="entry name" value="ADULT CUTICLE PROTEIN 65AA-RELATED"/>
    <property type="match status" value="1"/>
</dbReference>
<dbReference type="PANTHER" id="PTHR10380">
    <property type="entry name" value="CUTICLE PROTEIN"/>
    <property type="match status" value="1"/>
</dbReference>
<dbReference type="Pfam" id="PF00379">
    <property type="entry name" value="Chitin_bind_4"/>
    <property type="match status" value="1"/>
</dbReference>
<dbReference type="PROSITE" id="PS51155">
    <property type="entry name" value="CHIT_BIND_RR_2"/>
    <property type="match status" value="1"/>
</dbReference>
<proteinExistence type="evidence at protein level"/>
<keyword id="KW-0193">Cuticle</keyword>
<keyword id="KW-0903">Direct protein sequencing</keyword>
<keyword id="KW-1185">Reference proteome</keyword>
<keyword id="KW-0732">Signal</keyword>